<accession>A9MSZ3</accession>
<dbReference type="EMBL" id="CP000886">
    <property type="protein sequence ID" value="ABX69593.1"/>
    <property type="molecule type" value="Genomic_DNA"/>
</dbReference>
<dbReference type="RefSeq" id="WP_000447529.1">
    <property type="nucleotide sequence ID" value="NC_010102.1"/>
</dbReference>
<dbReference type="SMR" id="A9MSZ3"/>
<dbReference type="GeneID" id="93778672"/>
<dbReference type="KEGG" id="spq:SPAB_04276"/>
<dbReference type="PATRIC" id="fig|1016998.12.peg.4022"/>
<dbReference type="HOGENOM" id="CLU_083987_3_3_6"/>
<dbReference type="BioCyc" id="SENT1016998:SPAB_RS17410-MONOMER"/>
<dbReference type="Proteomes" id="UP000008556">
    <property type="component" value="Chromosome"/>
</dbReference>
<dbReference type="GO" id="GO:0022625">
    <property type="term" value="C:cytosolic large ribosomal subunit"/>
    <property type="evidence" value="ECO:0007669"/>
    <property type="project" value="TreeGrafter"/>
</dbReference>
<dbReference type="GO" id="GO:0019843">
    <property type="term" value="F:rRNA binding"/>
    <property type="evidence" value="ECO:0007669"/>
    <property type="project" value="UniProtKB-UniRule"/>
</dbReference>
<dbReference type="GO" id="GO:0003735">
    <property type="term" value="F:structural constituent of ribosome"/>
    <property type="evidence" value="ECO:0007669"/>
    <property type="project" value="InterPro"/>
</dbReference>
<dbReference type="GO" id="GO:0006412">
    <property type="term" value="P:translation"/>
    <property type="evidence" value="ECO:0007669"/>
    <property type="project" value="UniProtKB-UniRule"/>
</dbReference>
<dbReference type="CDD" id="cd00336">
    <property type="entry name" value="Ribosomal_L22"/>
    <property type="match status" value="1"/>
</dbReference>
<dbReference type="FunFam" id="3.90.470.10:FF:000001">
    <property type="entry name" value="50S ribosomal protein L22"/>
    <property type="match status" value="1"/>
</dbReference>
<dbReference type="Gene3D" id="3.90.470.10">
    <property type="entry name" value="Ribosomal protein L22/L17"/>
    <property type="match status" value="1"/>
</dbReference>
<dbReference type="HAMAP" id="MF_01331_B">
    <property type="entry name" value="Ribosomal_uL22_B"/>
    <property type="match status" value="1"/>
</dbReference>
<dbReference type="InterPro" id="IPR001063">
    <property type="entry name" value="Ribosomal_uL22"/>
</dbReference>
<dbReference type="InterPro" id="IPR005727">
    <property type="entry name" value="Ribosomal_uL22_bac/chlpt-type"/>
</dbReference>
<dbReference type="InterPro" id="IPR047867">
    <property type="entry name" value="Ribosomal_uL22_bac/org-type"/>
</dbReference>
<dbReference type="InterPro" id="IPR018260">
    <property type="entry name" value="Ribosomal_uL22_CS"/>
</dbReference>
<dbReference type="InterPro" id="IPR036394">
    <property type="entry name" value="Ribosomal_uL22_sf"/>
</dbReference>
<dbReference type="NCBIfam" id="TIGR01044">
    <property type="entry name" value="rplV_bact"/>
    <property type="match status" value="1"/>
</dbReference>
<dbReference type="PANTHER" id="PTHR13501">
    <property type="entry name" value="CHLOROPLAST 50S RIBOSOMAL PROTEIN L22-RELATED"/>
    <property type="match status" value="1"/>
</dbReference>
<dbReference type="PANTHER" id="PTHR13501:SF8">
    <property type="entry name" value="LARGE RIBOSOMAL SUBUNIT PROTEIN UL22M"/>
    <property type="match status" value="1"/>
</dbReference>
<dbReference type="Pfam" id="PF00237">
    <property type="entry name" value="Ribosomal_L22"/>
    <property type="match status" value="1"/>
</dbReference>
<dbReference type="SUPFAM" id="SSF54843">
    <property type="entry name" value="Ribosomal protein L22"/>
    <property type="match status" value="1"/>
</dbReference>
<dbReference type="PROSITE" id="PS00464">
    <property type="entry name" value="RIBOSOMAL_L22"/>
    <property type="match status" value="1"/>
</dbReference>
<evidence type="ECO:0000255" key="1">
    <source>
        <dbReference type="HAMAP-Rule" id="MF_01331"/>
    </source>
</evidence>
<evidence type="ECO:0000305" key="2"/>
<sequence>METIAKHRHARSSAQKVRLVADLIRGKKVSQALDILTYTNKKAAVLVKKVLESAIANAEHNDGADIDDLKVTKIFVDEGPSMKRIMPRAKGRADRILKRTSHITVVVSDR</sequence>
<name>RL22_SALPB</name>
<keyword id="KW-0687">Ribonucleoprotein</keyword>
<keyword id="KW-0689">Ribosomal protein</keyword>
<keyword id="KW-0694">RNA-binding</keyword>
<keyword id="KW-0699">rRNA-binding</keyword>
<protein>
    <recommendedName>
        <fullName evidence="1">Large ribosomal subunit protein uL22</fullName>
    </recommendedName>
    <alternativeName>
        <fullName evidence="2">50S ribosomal protein L22</fullName>
    </alternativeName>
</protein>
<reference key="1">
    <citation type="submission" date="2007-11" db="EMBL/GenBank/DDBJ databases">
        <authorList>
            <consortium name="The Salmonella enterica serovar Paratyphi B Genome Sequencing Project"/>
            <person name="McClelland M."/>
            <person name="Sanderson E.K."/>
            <person name="Porwollik S."/>
            <person name="Spieth J."/>
            <person name="Clifton W.S."/>
            <person name="Fulton R."/>
            <person name="Cordes M."/>
            <person name="Wollam A."/>
            <person name="Shah N."/>
            <person name="Pepin K."/>
            <person name="Bhonagiri V."/>
            <person name="Nash W."/>
            <person name="Johnson M."/>
            <person name="Thiruvilangam P."/>
            <person name="Wilson R."/>
        </authorList>
    </citation>
    <scope>NUCLEOTIDE SEQUENCE [LARGE SCALE GENOMIC DNA]</scope>
    <source>
        <strain>ATCC BAA-1250 / SPB7</strain>
    </source>
</reference>
<feature type="chain" id="PRO_1000086568" description="Large ribosomal subunit protein uL22">
    <location>
        <begin position="1"/>
        <end position="110"/>
    </location>
</feature>
<comment type="function">
    <text evidence="1">This protein binds specifically to 23S rRNA; its binding is stimulated by other ribosomal proteins, e.g. L4, L17, and L20. It is important during the early stages of 50S assembly. It makes multiple contacts with different domains of the 23S rRNA in the assembled 50S subunit and ribosome (By similarity).</text>
</comment>
<comment type="function">
    <text evidence="1">The globular domain of the protein is located near the polypeptide exit tunnel on the outside of the subunit, while an extended beta-hairpin is found that lines the wall of the exit tunnel in the center of the 70S ribosome.</text>
</comment>
<comment type="subunit">
    <text evidence="1">Part of the 50S ribosomal subunit.</text>
</comment>
<comment type="similarity">
    <text evidence="1">Belongs to the universal ribosomal protein uL22 family.</text>
</comment>
<gene>
    <name evidence="1" type="primary">rplV</name>
    <name type="ordered locus">SPAB_04276</name>
</gene>
<organism>
    <name type="scientific">Salmonella paratyphi B (strain ATCC BAA-1250 / SPB7)</name>
    <dbReference type="NCBI Taxonomy" id="1016998"/>
    <lineage>
        <taxon>Bacteria</taxon>
        <taxon>Pseudomonadati</taxon>
        <taxon>Pseudomonadota</taxon>
        <taxon>Gammaproteobacteria</taxon>
        <taxon>Enterobacterales</taxon>
        <taxon>Enterobacteriaceae</taxon>
        <taxon>Salmonella</taxon>
    </lineage>
</organism>
<proteinExistence type="inferred from homology"/>